<sequence>MAPQNLSTFCLLLLYLIGAVIAGRDFYKILGVPRSASIKDIKKAYRKLALQLHPDRNPDDPQAQEKFQDLGAAYEVLSDSEKRKQYDTYGEEGLKDGHQSSHGDIFSHFFGDFGFMFGGTPRQQDRNIPRGSDIIVDLEVTLEEVYAGNFVEVVRNKPVARQAPGKRKCNCRQEMRTTQLGPGRFQMTQEVVCDECPNVKLVNEERTLEVEIEPGVRDGMEYPFIGEGEPHVDGEPGDLRFRIKVVKHPIFERRGDDLYTNVTISLVESLVGFEMDITHLDGHKVHISRDKITRPGAKLWKKGEGLPNFDNNNIKGSLIITFDVDFPKEQLTEEAREGIKQLLKQGSVQKVYNGLQGY</sequence>
<gene>
    <name type="primary">DNAJB11</name>
    <name type="synonym">EDJ</name>
    <name type="synonym">ERJ3</name>
    <name type="synonym">HDJ9</name>
    <name type="ORF">PSEC0121</name>
    <name type="ORF">UNQ537/PRO1080</name>
</gene>
<accession>Q9UBS4</accession>
<accession>Q542Y5</accession>
<accession>Q542Y9</accession>
<accession>Q6IAQ8</accession>
<accession>Q96JC6</accession>
<proteinExistence type="evidence at protein level"/>
<dbReference type="EMBL" id="AB028859">
    <property type="protein sequence ID" value="BAA88307.1"/>
    <property type="molecule type" value="mRNA"/>
</dbReference>
<dbReference type="EMBL" id="AF228505">
    <property type="protein sequence ID" value="AAF61711.1"/>
    <property type="molecule type" value="mRNA"/>
</dbReference>
<dbReference type="EMBL" id="AJ250137">
    <property type="protein sequence ID" value="CAB65118.1"/>
    <property type="molecule type" value="mRNA"/>
</dbReference>
<dbReference type="EMBL" id="AF277317">
    <property type="protein sequence ID" value="AAK69110.1"/>
    <property type="molecule type" value="mRNA"/>
</dbReference>
<dbReference type="EMBL" id="AY359043">
    <property type="protein sequence ID" value="AAQ89402.1"/>
    <property type="molecule type" value="mRNA"/>
</dbReference>
<dbReference type="EMBL" id="AK075300">
    <property type="protein sequence ID" value="BAC11533.1"/>
    <property type="molecule type" value="mRNA"/>
</dbReference>
<dbReference type="EMBL" id="AK075430">
    <property type="protein sequence ID" value="BAC11617.1"/>
    <property type="molecule type" value="mRNA"/>
</dbReference>
<dbReference type="EMBL" id="BT007063">
    <property type="protein sequence ID" value="AAP35712.1"/>
    <property type="molecule type" value="mRNA"/>
</dbReference>
<dbReference type="EMBL" id="CR457096">
    <property type="protein sequence ID" value="CAG33377.1"/>
    <property type="molecule type" value="mRNA"/>
</dbReference>
<dbReference type="EMBL" id="CH471052">
    <property type="protein sequence ID" value="EAW78190.1"/>
    <property type="molecule type" value="Genomic_DNA"/>
</dbReference>
<dbReference type="EMBL" id="BC001144">
    <property type="protein sequence ID" value="AAH01144.1"/>
    <property type="molecule type" value="mRNA"/>
</dbReference>
<dbReference type="CCDS" id="CCDS3277.1"/>
<dbReference type="PIR" id="T52073">
    <property type="entry name" value="T52073"/>
</dbReference>
<dbReference type="RefSeq" id="NP_057390.1">
    <property type="nucleotide sequence ID" value="NM_016306.6"/>
</dbReference>
<dbReference type="SMR" id="Q9UBS4"/>
<dbReference type="BioGRID" id="119699">
    <property type="interactions" value="370"/>
</dbReference>
<dbReference type="CORUM" id="Q9UBS4"/>
<dbReference type="DIP" id="DIP-29678N"/>
<dbReference type="FunCoup" id="Q9UBS4">
    <property type="interactions" value="2427"/>
</dbReference>
<dbReference type="IntAct" id="Q9UBS4">
    <property type="interactions" value="136"/>
</dbReference>
<dbReference type="MINT" id="Q9UBS4"/>
<dbReference type="STRING" id="9606.ENSP00000414398"/>
<dbReference type="GlyConnect" id="1185">
    <property type="glycosylation" value="1 N-Linked glycan (1 site)"/>
</dbReference>
<dbReference type="GlyCosmos" id="Q9UBS4">
    <property type="glycosylation" value="1 site, 1 glycan"/>
</dbReference>
<dbReference type="GlyGen" id="Q9UBS4">
    <property type="glycosylation" value="4 sites, 9 N-linked glycans (1 site), 2 O-linked glycans (3 sites)"/>
</dbReference>
<dbReference type="iPTMnet" id="Q9UBS4"/>
<dbReference type="PhosphoSitePlus" id="Q9UBS4"/>
<dbReference type="SwissPalm" id="Q9UBS4"/>
<dbReference type="BioMuta" id="DNAJB11"/>
<dbReference type="DMDM" id="18203497"/>
<dbReference type="OGP" id="Q9UBS4"/>
<dbReference type="REPRODUCTION-2DPAGE" id="IPI00008454"/>
<dbReference type="jPOST" id="Q9UBS4"/>
<dbReference type="MassIVE" id="Q9UBS4"/>
<dbReference type="PaxDb" id="9606-ENSP00000414398"/>
<dbReference type="PeptideAtlas" id="Q9UBS4"/>
<dbReference type="ProteomicsDB" id="84046"/>
<dbReference type="Pumba" id="Q9UBS4"/>
<dbReference type="TopDownProteomics" id="Q9UBS4"/>
<dbReference type="Antibodypedia" id="2272">
    <property type="antibodies" value="238 antibodies from 29 providers"/>
</dbReference>
<dbReference type="DNASU" id="51726"/>
<dbReference type="Ensembl" id="ENST00000265028.8">
    <property type="protein sequence ID" value="ENSP00000265028.3"/>
    <property type="gene ID" value="ENSG00000090520.12"/>
</dbReference>
<dbReference type="Ensembl" id="ENST00000439351.5">
    <property type="protein sequence ID" value="ENSP00000414398.1"/>
    <property type="gene ID" value="ENSG00000090520.12"/>
</dbReference>
<dbReference type="GeneID" id="51726"/>
<dbReference type="KEGG" id="hsa:51726"/>
<dbReference type="MANE-Select" id="ENST00000265028.8">
    <property type="protein sequence ID" value="ENSP00000265028.3"/>
    <property type="RefSeq nucleotide sequence ID" value="NM_016306.6"/>
    <property type="RefSeq protein sequence ID" value="NP_057390.1"/>
</dbReference>
<dbReference type="UCSC" id="uc003fqi.4">
    <property type="organism name" value="human"/>
</dbReference>
<dbReference type="AGR" id="HGNC:14889"/>
<dbReference type="CTD" id="51726"/>
<dbReference type="DisGeNET" id="51726"/>
<dbReference type="GeneCards" id="DNAJB11"/>
<dbReference type="GeneReviews" id="DNAJB11"/>
<dbReference type="HGNC" id="HGNC:14889">
    <property type="gene designation" value="DNAJB11"/>
</dbReference>
<dbReference type="HPA" id="ENSG00000090520">
    <property type="expression patterns" value="Low tissue specificity"/>
</dbReference>
<dbReference type="MalaCards" id="DNAJB11"/>
<dbReference type="MIM" id="611341">
    <property type="type" value="gene"/>
</dbReference>
<dbReference type="MIM" id="618061">
    <property type="type" value="phenotype"/>
</dbReference>
<dbReference type="neXtProt" id="NX_Q9UBS4"/>
<dbReference type="OpenTargets" id="ENSG00000090520"/>
<dbReference type="Orphanet" id="730">
    <property type="disease" value="Autosomal dominant polycystic kidney disease"/>
</dbReference>
<dbReference type="PharmGKB" id="PA27413"/>
<dbReference type="VEuPathDB" id="HostDB:ENSG00000090520"/>
<dbReference type="eggNOG" id="KOG0713">
    <property type="taxonomic scope" value="Eukaryota"/>
</dbReference>
<dbReference type="GeneTree" id="ENSGT00940000155792"/>
<dbReference type="HOGENOM" id="CLU_017633_0_0_1"/>
<dbReference type="InParanoid" id="Q9UBS4"/>
<dbReference type="OMA" id="FAGRDFY"/>
<dbReference type="OrthoDB" id="550424at2759"/>
<dbReference type="PAN-GO" id="Q9UBS4">
    <property type="GO annotations" value="4 GO annotations based on evolutionary models"/>
</dbReference>
<dbReference type="PhylomeDB" id="Q9UBS4"/>
<dbReference type="TreeFam" id="TF105144"/>
<dbReference type="PathwayCommons" id="Q9UBS4"/>
<dbReference type="Reactome" id="R-HSA-381038">
    <property type="pathway name" value="XBP1(S) activates chaperone genes"/>
</dbReference>
<dbReference type="SignaLink" id="Q9UBS4"/>
<dbReference type="BioGRID-ORCS" id="51726">
    <property type="hits" value="57 hits in 1169 CRISPR screens"/>
</dbReference>
<dbReference type="ChiTaRS" id="DNAJB11">
    <property type="organism name" value="human"/>
</dbReference>
<dbReference type="GeneWiki" id="DNAJB11"/>
<dbReference type="GenomeRNAi" id="51726"/>
<dbReference type="Pharos" id="Q9UBS4">
    <property type="development level" value="Tbio"/>
</dbReference>
<dbReference type="PRO" id="PR:Q9UBS4"/>
<dbReference type="Proteomes" id="UP000005640">
    <property type="component" value="Chromosome 3"/>
</dbReference>
<dbReference type="RNAct" id="Q9UBS4">
    <property type="molecule type" value="protein"/>
</dbReference>
<dbReference type="Bgee" id="ENSG00000090520">
    <property type="expression patterns" value="Expressed in vermiform appendix and 98 other cell types or tissues"/>
</dbReference>
<dbReference type="GO" id="GO:0005783">
    <property type="term" value="C:endoplasmic reticulum"/>
    <property type="evidence" value="ECO:0000314"/>
    <property type="project" value="AgBase"/>
</dbReference>
<dbReference type="GO" id="GO:0034663">
    <property type="term" value="C:endoplasmic reticulum chaperone complex"/>
    <property type="evidence" value="ECO:0007669"/>
    <property type="project" value="Ensembl"/>
</dbReference>
<dbReference type="GO" id="GO:0005788">
    <property type="term" value="C:endoplasmic reticulum lumen"/>
    <property type="evidence" value="ECO:0000304"/>
    <property type="project" value="Reactome"/>
</dbReference>
<dbReference type="GO" id="GO:0005615">
    <property type="term" value="C:extracellular space"/>
    <property type="evidence" value="ECO:0007669"/>
    <property type="project" value="Ensembl"/>
</dbReference>
<dbReference type="GO" id="GO:0016020">
    <property type="term" value="C:membrane"/>
    <property type="evidence" value="ECO:0007005"/>
    <property type="project" value="UniProtKB"/>
</dbReference>
<dbReference type="GO" id="GO:0005634">
    <property type="term" value="C:nucleus"/>
    <property type="evidence" value="ECO:0007669"/>
    <property type="project" value="Ensembl"/>
</dbReference>
<dbReference type="GO" id="GO:0101031">
    <property type="term" value="C:protein folding chaperone complex"/>
    <property type="evidence" value="ECO:0000353"/>
    <property type="project" value="FlyBase"/>
</dbReference>
<dbReference type="GO" id="GO:0051787">
    <property type="term" value="F:misfolded protein binding"/>
    <property type="evidence" value="ECO:0000314"/>
    <property type="project" value="FlyBase"/>
</dbReference>
<dbReference type="GO" id="GO:0005102">
    <property type="term" value="F:signaling receptor binding"/>
    <property type="evidence" value="ECO:0007669"/>
    <property type="project" value="Ensembl"/>
</dbReference>
<dbReference type="GO" id="GO:0051082">
    <property type="term" value="F:unfolded protein binding"/>
    <property type="evidence" value="ECO:0000318"/>
    <property type="project" value="GO_Central"/>
</dbReference>
<dbReference type="GO" id="GO:0016556">
    <property type="term" value="P:mRNA modification"/>
    <property type="evidence" value="ECO:0007669"/>
    <property type="project" value="Ensembl"/>
</dbReference>
<dbReference type="GO" id="GO:0050768">
    <property type="term" value="P:negative regulation of neurogenesis"/>
    <property type="evidence" value="ECO:0007669"/>
    <property type="project" value="Ensembl"/>
</dbReference>
<dbReference type="GO" id="GO:0032781">
    <property type="term" value="P:positive regulation of ATP-dependent activity"/>
    <property type="evidence" value="ECO:0000314"/>
    <property type="project" value="AgBase"/>
</dbReference>
<dbReference type="GO" id="GO:0006457">
    <property type="term" value="P:protein folding"/>
    <property type="evidence" value="ECO:0007669"/>
    <property type="project" value="InterPro"/>
</dbReference>
<dbReference type="GO" id="GO:0051604">
    <property type="term" value="P:protein maturation"/>
    <property type="evidence" value="ECO:0000315"/>
    <property type="project" value="UniProtKB"/>
</dbReference>
<dbReference type="CDD" id="cd06257">
    <property type="entry name" value="DnaJ"/>
    <property type="match status" value="1"/>
</dbReference>
<dbReference type="CDD" id="cd10747">
    <property type="entry name" value="DnaJ_C"/>
    <property type="match status" value="1"/>
</dbReference>
<dbReference type="FunFam" id="1.10.287.110:FF:000040">
    <property type="entry name" value="dnaJ homolog subfamily B member 11"/>
    <property type="match status" value="1"/>
</dbReference>
<dbReference type="FunFam" id="2.60.260.20:FF:000013">
    <property type="entry name" value="DnaJ subfamily B member 11"/>
    <property type="match status" value="1"/>
</dbReference>
<dbReference type="Gene3D" id="1.10.287.110">
    <property type="entry name" value="DnaJ domain"/>
    <property type="match status" value="1"/>
</dbReference>
<dbReference type="Gene3D" id="2.60.260.20">
    <property type="entry name" value="Urease metallochaperone UreE, N-terminal domain"/>
    <property type="match status" value="2"/>
</dbReference>
<dbReference type="InterPro" id="IPR051736">
    <property type="entry name" value="DnaJ-B11-like"/>
</dbReference>
<dbReference type="InterPro" id="IPR002939">
    <property type="entry name" value="DnaJ_C"/>
</dbReference>
<dbReference type="InterPro" id="IPR001623">
    <property type="entry name" value="DnaJ_domain"/>
</dbReference>
<dbReference type="InterPro" id="IPR018253">
    <property type="entry name" value="DnaJ_domain_CS"/>
</dbReference>
<dbReference type="InterPro" id="IPR008971">
    <property type="entry name" value="HSP40/DnaJ_pept-bd"/>
</dbReference>
<dbReference type="InterPro" id="IPR036869">
    <property type="entry name" value="J_dom_sf"/>
</dbReference>
<dbReference type="PANTHER" id="PTHR44298">
    <property type="entry name" value="DNAJ HOMOLOG SUBFAMILY B MEMBER 11"/>
    <property type="match status" value="1"/>
</dbReference>
<dbReference type="PANTHER" id="PTHR44298:SF1">
    <property type="entry name" value="DNAJ HOMOLOG SUBFAMILY B MEMBER 11"/>
    <property type="match status" value="1"/>
</dbReference>
<dbReference type="Pfam" id="PF00226">
    <property type="entry name" value="DnaJ"/>
    <property type="match status" value="1"/>
</dbReference>
<dbReference type="Pfam" id="PF01556">
    <property type="entry name" value="DnaJ_C"/>
    <property type="match status" value="1"/>
</dbReference>
<dbReference type="PRINTS" id="PR00625">
    <property type="entry name" value="JDOMAIN"/>
</dbReference>
<dbReference type="SMART" id="SM00271">
    <property type="entry name" value="DnaJ"/>
    <property type="match status" value="1"/>
</dbReference>
<dbReference type="SUPFAM" id="SSF46565">
    <property type="entry name" value="Chaperone J-domain"/>
    <property type="match status" value="1"/>
</dbReference>
<dbReference type="SUPFAM" id="SSF49493">
    <property type="entry name" value="HSP40/DnaJ peptide-binding domain"/>
    <property type="match status" value="2"/>
</dbReference>
<dbReference type="PROSITE" id="PS00636">
    <property type="entry name" value="DNAJ_1"/>
    <property type="match status" value="1"/>
</dbReference>
<dbReference type="PROSITE" id="PS50076">
    <property type="entry name" value="DNAJ_2"/>
    <property type="match status" value="1"/>
</dbReference>
<reference key="1">
    <citation type="journal article" date="2000" name="Cell Stress Chaperones">
        <title>Mammalian HSP40/DNAJ homologs: cloning of novel cDNAs and a proposal for their classification and nomenclature.</title>
        <authorList>
            <person name="Ohtsuka K."/>
            <person name="Hata M."/>
        </authorList>
    </citation>
    <scope>NUCLEOTIDE SEQUENCE [MRNA]</scope>
</reference>
<reference key="2">
    <citation type="journal article" date="2000" name="J. Biol. Chem.">
        <title>HEDJ, an Hsp40 co-chaperone localized to the endoplasmic reticulum of human cells.</title>
        <authorList>
            <person name="Yu M."/>
            <person name="Haslam R.H.A."/>
            <person name="Haslam D.B."/>
        </authorList>
    </citation>
    <scope>NUCLEOTIDE SEQUENCE [MRNA]</scope>
    <scope>FUNCTION</scope>
    <scope>SUBCELLULAR LOCATION</scope>
    <scope>INTERACTION WITH HSPA5</scope>
    <scope>TISSUE SPECIFICITY</scope>
    <scope>GLYCOSYLATION</scope>
    <source>
        <tissue>Skeletal muscle</tissue>
    </source>
</reference>
<reference key="3">
    <citation type="journal article" date="2004" name="Biol. Chem.">
        <title>Characterization of pancreatic ERj3p, a homolog of yeast DnaJ-like protein Scj1p.</title>
        <authorList>
            <person name="Bies C."/>
            <person name="Blum R."/>
            <person name="Dudek J."/>
            <person name="Nastainczyk W."/>
            <person name="Oberhauser S."/>
            <person name="Jung M."/>
            <person name="Zimmermann R."/>
        </authorList>
    </citation>
    <scope>NUCLEOTIDE SEQUENCE [MRNA]</scope>
    <scope>SUBCELLULAR LOCATION</scope>
    <scope>GLYCOSYLATION</scope>
    <source>
        <tissue>Placenta</tissue>
    </source>
</reference>
<reference key="4">
    <citation type="submission" date="2000-06" db="EMBL/GenBank/DDBJ databases">
        <title>hPWP1-interacting protein 4.</title>
        <authorList>
            <person name="Honore B."/>
        </authorList>
    </citation>
    <scope>NUCLEOTIDE SEQUENCE [MRNA]</scope>
    <scope>VARIANT VAL-264</scope>
    <source>
        <tissue>Tonsil</tissue>
    </source>
</reference>
<reference key="5">
    <citation type="journal article" date="2003" name="Genome Res.">
        <title>The secreted protein discovery initiative (SPDI), a large-scale effort to identify novel human secreted and transmembrane proteins: a bioinformatics assessment.</title>
        <authorList>
            <person name="Clark H.F."/>
            <person name="Gurney A.L."/>
            <person name="Abaya E."/>
            <person name="Baker K."/>
            <person name="Baldwin D.T."/>
            <person name="Brush J."/>
            <person name="Chen J."/>
            <person name="Chow B."/>
            <person name="Chui C."/>
            <person name="Crowley C."/>
            <person name="Currell B."/>
            <person name="Deuel B."/>
            <person name="Dowd P."/>
            <person name="Eaton D."/>
            <person name="Foster J.S."/>
            <person name="Grimaldi C."/>
            <person name="Gu Q."/>
            <person name="Hass P.E."/>
            <person name="Heldens S."/>
            <person name="Huang A."/>
            <person name="Kim H.S."/>
            <person name="Klimowski L."/>
            <person name="Jin Y."/>
            <person name="Johnson S."/>
            <person name="Lee J."/>
            <person name="Lewis L."/>
            <person name="Liao D."/>
            <person name="Mark M.R."/>
            <person name="Robbie E."/>
            <person name="Sanchez C."/>
            <person name="Schoenfeld J."/>
            <person name="Seshagiri S."/>
            <person name="Simmons L."/>
            <person name="Singh J."/>
            <person name="Smith V."/>
            <person name="Stinson J."/>
            <person name="Vagts A."/>
            <person name="Vandlen R.L."/>
            <person name="Watanabe C."/>
            <person name="Wieand D."/>
            <person name="Woods K."/>
            <person name="Xie M.-H."/>
            <person name="Yansura D.G."/>
            <person name="Yi S."/>
            <person name="Yu G."/>
            <person name="Yuan J."/>
            <person name="Zhang M."/>
            <person name="Zhang Z."/>
            <person name="Goddard A.D."/>
            <person name="Wood W.I."/>
            <person name="Godowski P.J."/>
            <person name="Gray A.M."/>
        </authorList>
    </citation>
    <scope>NUCLEOTIDE SEQUENCE [LARGE SCALE MRNA]</scope>
</reference>
<reference key="6">
    <citation type="journal article" date="2005" name="DNA Res.">
        <title>Signal sequence and keyword trap in silico for selection of full-length human cDNAs encoding secretion or membrane proteins from oligo-capped cDNA libraries.</title>
        <authorList>
            <person name="Otsuki T."/>
            <person name="Ota T."/>
            <person name="Nishikawa T."/>
            <person name="Hayashi K."/>
            <person name="Suzuki Y."/>
            <person name="Yamamoto J."/>
            <person name="Wakamatsu A."/>
            <person name="Kimura K."/>
            <person name="Sakamoto K."/>
            <person name="Hatano N."/>
            <person name="Kawai Y."/>
            <person name="Ishii S."/>
            <person name="Saito K."/>
            <person name="Kojima S."/>
            <person name="Sugiyama T."/>
            <person name="Ono T."/>
            <person name="Okano K."/>
            <person name="Yoshikawa Y."/>
            <person name="Aotsuka S."/>
            <person name="Sasaki N."/>
            <person name="Hattori A."/>
            <person name="Okumura K."/>
            <person name="Nagai K."/>
            <person name="Sugano S."/>
            <person name="Isogai T."/>
        </authorList>
    </citation>
    <scope>NUCLEOTIDE SEQUENCE [LARGE SCALE MRNA]</scope>
    <scope>VARIANT VAL-264</scope>
    <source>
        <tissue>Placenta</tissue>
        <tissue>Retinoblastoma</tissue>
    </source>
</reference>
<reference key="7">
    <citation type="submission" date="2003-05" db="EMBL/GenBank/DDBJ databases">
        <title>Cloning of human full-length CDSs in BD Creator(TM) system donor vector.</title>
        <authorList>
            <person name="Kalnine N."/>
            <person name="Chen X."/>
            <person name="Rolfs A."/>
            <person name="Halleck A."/>
            <person name="Hines L."/>
            <person name="Eisenstein S."/>
            <person name="Koundinya M."/>
            <person name="Raphael J."/>
            <person name="Moreira D."/>
            <person name="Kelley T."/>
            <person name="LaBaer J."/>
            <person name="Lin Y."/>
            <person name="Phelan M."/>
            <person name="Farmer A."/>
        </authorList>
    </citation>
    <scope>NUCLEOTIDE SEQUENCE [LARGE SCALE MRNA]</scope>
</reference>
<reference key="8">
    <citation type="submission" date="2004-06" db="EMBL/GenBank/DDBJ databases">
        <title>Cloning of human full open reading frames in Gateway(TM) system entry vector (pDONR201).</title>
        <authorList>
            <person name="Ebert L."/>
            <person name="Schick M."/>
            <person name="Neubert P."/>
            <person name="Schatten R."/>
            <person name="Henze S."/>
            <person name="Korn B."/>
        </authorList>
    </citation>
    <scope>NUCLEOTIDE SEQUENCE [LARGE SCALE MRNA]</scope>
</reference>
<reference key="9">
    <citation type="submission" date="2005-09" db="EMBL/GenBank/DDBJ databases">
        <authorList>
            <person name="Mural R.J."/>
            <person name="Istrail S."/>
            <person name="Sutton G.G."/>
            <person name="Florea L."/>
            <person name="Halpern A.L."/>
            <person name="Mobarry C.M."/>
            <person name="Lippert R."/>
            <person name="Walenz B."/>
            <person name="Shatkay H."/>
            <person name="Dew I."/>
            <person name="Miller J.R."/>
            <person name="Flanigan M.J."/>
            <person name="Edwards N.J."/>
            <person name="Bolanos R."/>
            <person name="Fasulo D."/>
            <person name="Halldorsson B.V."/>
            <person name="Hannenhalli S."/>
            <person name="Turner R."/>
            <person name="Yooseph S."/>
            <person name="Lu F."/>
            <person name="Nusskern D.R."/>
            <person name="Shue B.C."/>
            <person name="Zheng X.H."/>
            <person name="Zhong F."/>
            <person name="Delcher A.L."/>
            <person name="Huson D.H."/>
            <person name="Kravitz S.A."/>
            <person name="Mouchard L."/>
            <person name="Reinert K."/>
            <person name="Remington K.A."/>
            <person name="Clark A.G."/>
            <person name="Waterman M.S."/>
            <person name="Eichler E.E."/>
            <person name="Adams M.D."/>
            <person name="Hunkapiller M.W."/>
            <person name="Myers E.W."/>
            <person name="Venter J.C."/>
        </authorList>
    </citation>
    <scope>NUCLEOTIDE SEQUENCE [LARGE SCALE GENOMIC DNA]</scope>
</reference>
<reference key="10">
    <citation type="journal article" date="2004" name="Genome Res.">
        <title>The status, quality, and expansion of the NIH full-length cDNA project: the Mammalian Gene Collection (MGC).</title>
        <authorList>
            <consortium name="The MGC Project Team"/>
        </authorList>
    </citation>
    <scope>NUCLEOTIDE SEQUENCE [LARGE SCALE MRNA]</scope>
    <source>
        <tissue>Lung</tissue>
    </source>
</reference>
<reference key="11">
    <citation type="journal article" date="2001" name="J. Biol. Chem.">
        <title>A DnaJ protein, apobec-1-binding protein-2, modulates apolipoprotein B mRNA editing.</title>
        <authorList>
            <person name="Lau P.P."/>
            <person name="Villanueva H."/>
            <person name="Kobayashi K."/>
            <person name="Nakamuta M."/>
            <person name="Chang B.H.-J."/>
            <person name="Chan L."/>
        </authorList>
    </citation>
    <scope>TISSUE SPECIFICITY</scope>
</reference>
<reference key="12">
    <citation type="journal article" date="2002" name="Mol. Biol. Cell">
        <title>A subset of chaperones and folding enzymes form multiprotein complexes in endoplasmic reticulum to bind nascent proteins.</title>
        <authorList>
            <person name="Meunier L."/>
            <person name="Usherwood Y.-K."/>
            <person name="Chung K.T."/>
            <person name="Hendershot L.M."/>
        </authorList>
    </citation>
    <scope>COMPONENT OF A CHAPERONE COMPLEX</scope>
</reference>
<reference key="13">
    <citation type="journal article" date="2004" name="Cell Stress Chaperones">
        <title>Localization and function in endoplasmic reticulum stress tolerance of ERdj3, a new member of Hsp40 family protein.</title>
        <authorList>
            <person name="Nakanishi K."/>
            <person name="Kamiguchi K."/>
            <person name="Torigoe T."/>
            <person name="Nabeta C."/>
            <person name="Hirohashi Y."/>
            <person name="Asanuma H."/>
            <person name="Tobioka H."/>
            <person name="Koge N."/>
            <person name="Harada O."/>
            <person name="Tamura Y."/>
            <person name="Nagano H."/>
            <person name="Yano S."/>
            <person name="Chiba S."/>
            <person name="Matsumoto H."/>
            <person name="Sato N."/>
        </authorList>
    </citation>
    <scope>SUBCELLULAR LOCATION</scope>
    <scope>INDUCTION</scope>
</reference>
<reference key="14">
    <citation type="journal article" date="2005" name="Mol. Biol. Cell">
        <title>ERdj3, a stress-inducible endoplasmic reticulum DnaJ homologue, serves as a cofactor for BiP's interactions with unfolded substrates.</title>
        <authorList>
            <person name="Shen Y."/>
            <person name="Hendershot L.M."/>
        </authorList>
    </citation>
    <scope>FUNCTION</scope>
    <scope>SUBCELLULAR LOCATION</scope>
    <scope>INDUCTION</scope>
    <scope>TISSUE SPECIFICITY</scope>
    <scope>GLYCOSYLATION</scope>
    <scope>INTERACTION WITH DENATURED SUBSTRATES</scope>
    <scope>MUTAGENESIS OF HIS-53</scope>
</reference>
<reference key="15">
    <citation type="journal article" date="2007" name="Arch. Biochem. Biophys.">
        <title>Contribution of the HEDJ/ERdj3 cysteine-rich domain to substrate interactions.</title>
        <authorList>
            <person name="Marcus N.Y."/>
            <person name="Marcus R.A."/>
            <person name="Schmidt B.Z."/>
            <person name="Haslam D.B."/>
        </authorList>
    </citation>
    <scope>MUTAGENESIS OF CYS-169; CYS-171; CYS-193 AND CYS-196</scope>
    <scope>INTERACTION WITH DENATURED SUBSTRATES</scope>
</reference>
<reference key="16">
    <citation type="journal article" date="2007" name="Science">
        <title>ATM and ATR substrate analysis reveals extensive protein networks responsive to DNA damage.</title>
        <authorList>
            <person name="Matsuoka S."/>
            <person name="Ballif B.A."/>
            <person name="Smogorzewska A."/>
            <person name="McDonald E.R. III"/>
            <person name="Hurov K.E."/>
            <person name="Luo J."/>
            <person name="Bakalarski C.E."/>
            <person name="Zhao Z."/>
            <person name="Solimini N."/>
            <person name="Lerenthal Y."/>
            <person name="Shiloh Y."/>
            <person name="Gygi S.P."/>
            <person name="Elledge S.J."/>
        </authorList>
    </citation>
    <scope>PHOSPHORYLATION [LARGE SCALE ANALYSIS] AT THR-188</scope>
    <scope>IDENTIFICATION BY MASS SPECTROMETRY [LARGE SCALE ANALYSIS]</scope>
    <source>
        <tissue>Embryonic kidney</tissue>
    </source>
</reference>
<reference key="17">
    <citation type="journal article" date="2009" name="J. Proteome Res.">
        <title>Glycoproteomics analysis of human liver tissue by combination of multiple enzyme digestion and hydrazide chemistry.</title>
        <authorList>
            <person name="Chen R."/>
            <person name="Jiang X."/>
            <person name="Sun D."/>
            <person name="Han G."/>
            <person name="Wang F."/>
            <person name="Ye M."/>
            <person name="Wang L."/>
            <person name="Zou H."/>
        </authorList>
    </citation>
    <scope>GLYCOSYLATION [LARGE SCALE ANALYSIS] AT ASN-261</scope>
    <source>
        <tissue>Liver</tissue>
    </source>
</reference>
<reference key="18">
    <citation type="journal article" date="2011" name="BMC Syst. Biol.">
        <title>Initial characterization of the human central proteome.</title>
        <authorList>
            <person name="Burkard T.R."/>
            <person name="Planyavsky M."/>
            <person name="Kaupe I."/>
            <person name="Breitwieser F.P."/>
            <person name="Buerckstuemmer T."/>
            <person name="Bennett K.L."/>
            <person name="Superti-Furga G."/>
            <person name="Colinge J."/>
        </authorList>
    </citation>
    <scope>IDENTIFICATION BY MASS SPECTROMETRY [LARGE SCALE ANALYSIS]</scope>
</reference>
<reference key="19">
    <citation type="journal article" date="2014" name="J. Proteomics">
        <title>An enzyme assisted RP-RPLC approach for in-depth analysis of human liver phosphoproteome.</title>
        <authorList>
            <person name="Bian Y."/>
            <person name="Song C."/>
            <person name="Cheng K."/>
            <person name="Dong M."/>
            <person name="Wang F."/>
            <person name="Huang J."/>
            <person name="Sun D."/>
            <person name="Wang L."/>
            <person name="Ye M."/>
            <person name="Zou H."/>
        </authorList>
    </citation>
    <scope>IDENTIFICATION BY MASS SPECTROMETRY [LARGE SCALE ANALYSIS]</scope>
    <source>
        <tissue>Liver</tissue>
    </source>
</reference>
<reference key="20">
    <citation type="journal article" date="2015" name="Proteomics">
        <title>N-terminome analysis of the human mitochondrial proteome.</title>
        <authorList>
            <person name="Vaca Jacome A.S."/>
            <person name="Rabilloud T."/>
            <person name="Schaeffer-Reiss C."/>
            <person name="Rompais M."/>
            <person name="Ayoub D."/>
            <person name="Lane L."/>
            <person name="Bairoch A."/>
            <person name="Van Dorsselaer A."/>
            <person name="Carapito C."/>
        </authorList>
    </citation>
    <scope>IDENTIFICATION BY MASS SPECTROMETRY [LARGE SCALE ANALYSIS]</scope>
</reference>
<reference key="21">
    <citation type="journal article" date="2018" name="Am. J. Hum. Genet.">
        <title>Monoallelic mutations to DNAJB11 cause atypical autosomal-dominant polycystic kidney disease.</title>
        <authorList>
            <consortium name="Genkyst Study Group"/>
            <consortium name="HALT Progression of Polycystic Kidney Disease Group"/>
            <consortium name="Consortium for Radiologic Imaging Studies of Polycystic Kidney Disease"/>
            <person name="Cornec-Le Gall E."/>
            <person name="Olson R.J."/>
            <person name="Besse W."/>
            <person name="Heyer C.M."/>
            <person name="Gainullin V.G."/>
            <person name="Smith J.M."/>
            <person name="Audrezet M.P."/>
            <person name="Hopp K."/>
            <person name="Porath B."/>
            <person name="Shi B."/>
            <person name="Baheti S."/>
            <person name="Senum S.R."/>
            <person name="Arroyo J."/>
            <person name="Madsen C.D."/>
            <person name="Ferec C."/>
            <person name="Joly D."/>
            <person name="Jouret F."/>
            <person name="Fikri-Benbrahim O."/>
            <person name="Charasse C."/>
            <person name="Coulibaly J.M."/>
            <person name="Yu A.S."/>
            <person name="Khalili K."/>
            <person name="Pei Y."/>
            <person name="Somlo S."/>
            <person name="Le Meur Y."/>
            <person name="Torres V.E."/>
            <person name="Harris P.C."/>
        </authorList>
    </citation>
    <scope>FUNCTION</scope>
    <scope>INVOLVEMENT IN PKD6</scope>
    <scope>VARIANTS PKD6 ARG-54; PRO-77 AND 206-ARG--TYR-358 DEL</scope>
</reference>
<protein>
    <recommendedName>
        <fullName>DnaJ homolog subfamily B member 11</fullName>
    </recommendedName>
    <alternativeName>
        <fullName>APOBEC1-binding protein 2</fullName>
        <shortName>ABBP-2</shortName>
    </alternativeName>
    <alternativeName>
        <fullName>DnaJ protein homolog 9</fullName>
    </alternativeName>
    <alternativeName>
        <fullName>ER-associated DNAJ</fullName>
    </alternativeName>
    <alternativeName>
        <fullName>ER-associated Hsp40 co-chaperone</fullName>
    </alternativeName>
    <alternativeName>
        <fullName>Endoplasmic reticulum DNA J domain-containing protein 3</fullName>
        <shortName>ER-resident protein ERdj3</shortName>
        <shortName>ERdj3</shortName>
        <shortName>ERj3p</shortName>
    </alternativeName>
    <alternativeName>
        <fullName>HEDJ</fullName>
    </alternativeName>
    <alternativeName>
        <fullName>Human DnaJ protein 9</fullName>
        <shortName>hDj-9</shortName>
    </alternativeName>
    <alternativeName>
        <fullName>PWP1-interacting protein 4</fullName>
    </alternativeName>
</protein>
<keyword id="KW-0143">Chaperone</keyword>
<keyword id="KW-0225">Disease variant</keyword>
<keyword id="KW-1015">Disulfide bond</keyword>
<keyword id="KW-0256">Endoplasmic reticulum</keyword>
<keyword id="KW-0325">Glycoprotein</keyword>
<keyword id="KW-0597">Phosphoprotein</keyword>
<keyword id="KW-1267">Proteomics identification</keyword>
<keyword id="KW-1185">Reference proteome</keyword>
<keyword id="KW-0732">Signal</keyword>
<comment type="function">
    <text evidence="3 6 11">As a co-chaperone for HSPA5 it is required for proper folding, trafficking or degradation of proteins (PubMed:10827079, PubMed:15525676, PubMed:29706351). Binds directly to both unfolded proteins that are substrates for ERAD and nascent unfolded peptide chains, but dissociates from the HSPA5-unfolded protein complex before folding is completed (PubMed:15525676). May help recruiting HSPA5 and other chaperones to the substrate. Stimulates HSPA5 ATPase activity (PubMed:10827079). It is necessary for maturation and correct trafficking of PKD1 (PubMed:29706351).</text>
</comment>
<comment type="subunit">
    <text evidence="3 6 9">Part of a large chaperone multiprotein complex comprising DNAJB11, HSP90B1, HSPA5, HYOU, PDIA2, PDIA4, PDIA6, PPIB, SDF2L1, UGGT1 and very small amounts of ERP29, but not, or at very low levels, CALR nor CANX. Binds to denatured substrates in an ATP-independent manner. Interacts via the J domain with HSPA5 in an ATP-dependent manner.</text>
</comment>
<comment type="interaction">
    <interactant intactId="EBI-713113">
        <id>Q9UBS4</id>
    </interactant>
    <interactant intactId="EBI-354921">
        <id>P11021</id>
        <label>HSPA5</label>
    </interactant>
    <organismsDiffer>false</organismsDiffer>
    <experiments>5</experiments>
</comment>
<comment type="interaction">
    <interactant intactId="EBI-713113">
        <id>Q9UBS4</id>
    </interactant>
    <interactant intactId="EBI-738783">
        <id>P15516</id>
        <label>HTN3</label>
    </interactant>
    <organismsDiffer>false</organismsDiffer>
    <experiments>3</experiments>
</comment>
<comment type="interaction">
    <interactant intactId="EBI-713113">
        <id>Q9UBS4</id>
    </interactant>
    <interactant intactId="EBI-724973">
        <id>Q8NDZ2</id>
        <label>SIMC1</label>
    </interactant>
    <organismsDiffer>false</organismsDiffer>
    <experiments>3</experiments>
</comment>
<comment type="interaction">
    <interactant intactId="EBI-713113">
        <id>Q9UBS4</id>
    </interactant>
    <interactant intactId="EBI-10712653">
        <id>Q8ZQQ2</id>
        <label>slrP</label>
    </interactant>
    <organismsDiffer>true</organismsDiffer>
    <experiments>4</experiments>
</comment>
<comment type="subcellular location">
    <subcellularLocation>
        <location evidence="3 5 6 7">Endoplasmic reticulum lumen</location>
    </subcellularLocation>
    <text>Associated with the ER membrane in a C-terminally epitope-tagged construct.</text>
</comment>
<comment type="tissue specificity">
    <text evidence="3 4 6">Widely expressed.</text>
</comment>
<comment type="induction">
    <text evidence="6 7">By endoplasmic reticulum stress-inducing agents such as thapsigargin and tunicamycin.</text>
</comment>
<comment type="PTM">
    <text>Contains high-mannose Endo H-sensitive carbohydrates.</text>
</comment>
<comment type="PTM">
    <text>Cys-169, Cys-171, Cys-193 and Cys-196 form intramolecular disulfide bonds. The preferential partner for each Cys is not known.</text>
</comment>
<comment type="PTM">
    <text>Thr-188 was reported to be phosphorylated upon DNA damage by ATM or ATR; however as this position has been shown to be in the ER lumen, the in vivo relevance is not proven.</text>
</comment>
<comment type="disease" evidence="11">
    <disease id="DI-05292">
        <name>Polycystic kidney disease 6 with or without polycystic liver disease</name>
        <acronym>PKD6</acronym>
        <description>A form of polycystic kidney disease, a disorder characterized by progressive formation and enlargement of cysts in both kidneys, typically leading to end-stage renal disease in adult life. Cysts also occur in other organs, particularly the liver. PKD6 inheritance is autosomal dominant.</description>
        <dbReference type="MIM" id="618061"/>
    </disease>
    <text>The disease is caused by variants affecting the gene represented in this entry.</text>
</comment>
<comment type="caution">
    <text evidence="13">PubMed:11584023 reported a cytosolic, as well as nuclear subcellular location. This result was obtained using an N-terminally GFP-tagged construct which most probably affected signal peptide-driven targeting to the ER. As a consequence, the in vivo revelance of the observed interaction with APOBEC1, a nuclear protein, is dubious. This holds true for the interaction with PWP1.</text>
</comment>
<feature type="signal peptide" evidence="1">
    <location>
        <begin position="1"/>
        <end position="22"/>
    </location>
</feature>
<feature type="chain" id="PRO_0000007260" description="DnaJ homolog subfamily B member 11">
    <location>
        <begin position="23"/>
        <end position="358"/>
    </location>
</feature>
<feature type="domain" description="J" evidence="2">
    <location>
        <begin position="25"/>
        <end position="90"/>
    </location>
</feature>
<feature type="modified residue" description="Phosphothreonine" evidence="14">
    <location>
        <position position="188"/>
    </location>
</feature>
<feature type="glycosylation site" description="N-linked (GlcNAc...) asparagine" evidence="10">
    <location>
        <position position="261"/>
    </location>
</feature>
<feature type="sequence variant" id="VAR_081002" description="In PKD6; dbSNP:rs1553849919." evidence="11">
    <original>P</original>
    <variation>R</variation>
    <location>
        <position position="54"/>
    </location>
</feature>
<feature type="sequence variant" id="VAR_081003" description="In PKD6; dbSNP:rs1553850185." evidence="11">
    <original>L</original>
    <variation>P</variation>
    <location>
        <position position="77"/>
    </location>
</feature>
<feature type="sequence variant" id="VAR_081004" description="In PKD6." evidence="11">
    <location>
        <begin position="206"/>
        <end position="358"/>
    </location>
</feature>
<feature type="sequence variant" id="VAR_016092" description="In dbSNP:rs8147." evidence="8 12">
    <original>I</original>
    <variation>V</variation>
    <location>
        <position position="264"/>
    </location>
</feature>
<feature type="mutagenesis site" description="Loss of HSPA5-binding, but no effect on interaction with denatured substrates." evidence="6">
    <original>H</original>
    <variation>Q</variation>
    <location>
        <position position="53"/>
    </location>
</feature>
<feature type="mutagenesis site" description="Drastic loss of interaction with denatured substrates." evidence="9">
    <original>C</original>
    <variation>S</variation>
    <location>
        <position position="169"/>
    </location>
</feature>
<feature type="mutagenesis site" description="Drastic loss of interaction with denatured substrates." evidence="9">
    <original>C</original>
    <variation>S</variation>
    <location>
        <position position="171"/>
    </location>
</feature>
<feature type="mutagenesis site" description="Drastic loss of interaction with denatured substrates." evidence="9">
    <original>C</original>
    <variation>S</variation>
    <location>
        <position position="193"/>
    </location>
</feature>
<feature type="mutagenesis site" description="Drastic loss of interaction with denatured substrates." evidence="9">
    <original>C</original>
    <variation>S</variation>
    <location>
        <position position="196"/>
    </location>
</feature>
<feature type="sequence conflict" description="In Ref. 8; CAG33377." evidence="13" ref="8">
    <original>K</original>
    <variation>R</variation>
    <location>
        <position position="247"/>
    </location>
</feature>
<name>DJB11_HUMAN</name>
<organism>
    <name type="scientific">Homo sapiens</name>
    <name type="common">Human</name>
    <dbReference type="NCBI Taxonomy" id="9606"/>
    <lineage>
        <taxon>Eukaryota</taxon>
        <taxon>Metazoa</taxon>
        <taxon>Chordata</taxon>
        <taxon>Craniata</taxon>
        <taxon>Vertebrata</taxon>
        <taxon>Euteleostomi</taxon>
        <taxon>Mammalia</taxon>
        <taxon>Eutheria</taxon>
        <taxon>Euarchontoglires</taxon>
        <taxon>Primates</taxon>
        <taxon>Haplorrhini</taxon>
        <taxon>Catarrhini</taxon>
        <taxon>Hominidae</taxon>
        <taxon>Homo</taxon>
    </lineage>
</organism>
<evidence type="ECO:0000250" key="1"/>
<evidence type="ECO:0000255" key="2">
    <source>
        <dbReference type="PROSITE-ProRule" id="PRU00286"/>
    </source>
</evidence>
<evidence type="ECO:0000269" key="3">
    <source>
    </source>
</evidence>
<evidence type="ECO:0000269" key="4">
    <source>
    </source>
</evidence>
<evidence type="ECO:0000269" key="5">
    <source>
    </source>
</evidence>
<evidence type="ECO:0000269" key="6">
    <source>
    </source>
</evidence>
<evidence type="ECO:0000269" key="7">
    <source>
    </source>
</evidence>
<evidence type="ECO:0000269" key="8">
    <source>
    </source>
</evidence>
<evidence type="ECO:0000269" key="9">
    <source>
    </source>
</evidence>
<evidence type="ECO:0000269" key="10">
    <source>
    </source>
</evidence>
<evidence type="ECO:0000269" key="11">
    <source>
    </source>
</evidence>
<evidence type="ECO:0000269" key="12">
    <source ref="4"/>
</evidence>
<evidence type="ECO:0000305" key="13"/>
<evidence type="ECO:0007744" key="14">
    <source>
    </source>
</evidence>